<comment type="function">
    <text evidence="1">Transfers a succinyl group from succinyl-CoA to L-homoserine, forming succinyl-L-homoserine.</text>
</comment>
<comment type="catalytic activity">
    <reaction evidence="1">
        <text>L-homoserine + succinyl-CoA = O-succinyl-L-homoserine + CoA</text>
        <dbReference type="Rhea" id="RHEA:22008"/>
        <dbReference type="ChEBI" id="CHEBI:57287"/>
        <dbReference type="ChEBI" id="CHEBI:57292"/>
        <dbReference type="ChEBI" id="CHEBI:57476"/>
        <dbReference type="ChEBI" id="CHEBI:57661"/>
        <dbReference type="EC" id="2.3.1.46"/>
    </reaction>
</comment>
<comment type="pathway">
    <text evidence="1">Amino-acid biosynthesis; L-methionine biosynthesis via de novo pathway; O-succinyl-L-homoserine from L-homoserine: step 1/1.</text>
</comment>
<comment type="subunit">
    <text evidence="1">Homodimer.</text>
</comment>
<comment type="subcellular location">
    <subcellularLocation>
        <location evidence="1">Cytoplasm</location>
    </subcellularLocation>
</comment>
<comment type="similarity">
    <text evidence="1">Belongs to the MetA family.</text>
</comment>
<dbReference type="EC" id="2.3.1.46" evidence="1"/>
<dbReference type="EMBL" id="CP001113">
    <property type="protein sequence ID" value="ACF61818.1"/>
    <property type="molecule type" value="Genomic_DNA"/>
</dbReference>
<dbReference type="SMR" id="B4T110"/>
<dbReference type="KEGG" id="see:SNSL254_A4518"/>
<dbReference type="HOGENOM" id="CLU_057851_0_1_6"/>
<dbReference type="UniPathway" id="UPA00051">
    <property type="reaction ID" value="UER00075"/>
</dbReference>
<dbReference type="Proteomes" id="UP000008824">
    <property type="component" value="Chromosome"/>
</dbReference>
<dbReference type="GO" id="GO:0005737">
    <property type="term" value="C:cytoplasm"/>
    <property type="evidence" value="ECO:0007669"/>
    <property type="project" value="UniProtKB-SubCell"/>
</dbReference>
<dbReference type="GO" id="GO:0004414">
    <property type="term" value="F:homoserine O-acetyltransferase activity"/>
    <property type="evidence" value="ECO:0007669"/>
    <property type="project" value="UniProtKB-UniRule"/>
</dbReference>
<dbReference type="GO" id="GO:0008899">
    <property type="term" value="F:homoserine O-succinyltransferase activity"/>
    <property type="evidence" value="ECO:0007669"/>
    <property type="project" value="UniProtKB-EC"/>
</dbReference>
<dbReference type="GO" id="GO:0019281">
    <property type="term" value="P:L-methionine biosynthetic process from homoserine via O-succinyl-L-homoserine and cystathionine"/>
    <property type="evidence" value="ECO:0007669"/>
    <property type="project" value="InterPro"/>
</dbReference>
<dbReference type="CDD" id="cd03131">
    <property type="entry name" value="GATase1_HTS"/>
    <property type="match status" value="1"/>
</dbReference>
<dbReference type="FunFam" id="3.40.50.880:FF:000004">
    <property type="entry name" value="Homoserine O-succinyltransferase"/>
    <property type="match status" value="1"/>
</dbReference>
<dbReference type="Gene3D" id="3.40.50.880">
    <property type="match status" value="1"/>
</dbReference>
<dbReference type="HAMAP" id="MF_00295">
    <property type="entry name" value="MetA_acyltransf"/>
    <property type="match status" value="1"/>
</dbReference>
<dbReference type="InterPro" id="IPR029062">
    <property type="entry name" value="Class_I_gatase-like"/>
</dbReference>
<dbReference type="InterPro" id="IPR005697">
    <property type="entry name" value="HST_MetA"/>
</dbReference>
<dbReference type="InterPro" id="IPR033752">
    <property type="entry name" value="MetA_family"/>
</dbReference>
<dbReference type="NCBIfam" id="TIGR01001">
    <property type="entry name" value="metA"/>
    <property type="match status" value="1"/>
</dbReference>
<dbReference type="PANTHER" id="PTHR20919">
    <property type="entry name" value="HOMOSERINE O-SUCCINYLTRANSFERASE"/>
    <property type="match status" value="1"/>
</dbReference>
<dbReference type="PANTHER" id="PTHR20919:SF0">
    <property type="entry name" value="HOMOSERINE O-SUCCINYLTRANSFERASE"/>
    <property type="match status" value="1"/>
</dbReference>
<dbReference type="Pfam" id="PF04204">
    <property type="entry name" value="HTS"/>
    <property type="match status" value="1"/>
</dbReference>
<dbReference type="PIRSF" id="PIRSF000450">
    <property type="entry name" value="H_ser_succinyltr"/>
    <property type="match status" value="1"/>
</dbReference>
<dbReference type="SUPFAM" id="SSF52317">
    <property type="entry name" value="Class I glutamine amidotransferase-like"/>
    <property type="match status" value="1"/>
</dbReference>
<protein>
    <recommendedName>
        <fullName evidence="1">Homoserine O-succinyltransferase</fullName>
        <shortName evidence="1">HST</shortName>
        <ecNumber evidence="1">2.3.1.46</ecNumber>
    </recommendedName>
    <alternativeName>
        <fullName evidence="1">Homoserine transsuccinylase</fullName>
        <shortName evidence="1">HTS</shortName>
    </alternativeName>
</protein>
<reference key="1">
    <citation type="journal article" date="2011" name="J. Bacteriol.">
        <title>Comparative genomics of 28 Salmonella enterica isolates: evidence for CRISPR-mediated adaptive sublineage evolution.</title>
        <authorList>
            <person name="Fricke W.F."/>
            <person name="Mammel M.K."/>
            <person name="McDermott P.F."/>
            <person name="Tartera C."/>
            <person name="White D.G."/>
            <person name="Leclerc J.E."/>
            <person name="Ravel J."/>
            <person name="Cebula T.A."/>
        </authorList>
    </citation>
    <scope>NUCLEOTIDE SEQUENCE [LARGE SCALE GENOMIC DNA]</scope>
    <source>
        <strain>SL254</strain>
    </source>
</reference>
<evidence type="ECO:0000255" key="1">
    <source>
        <dbReference type="HAMAP-Rule" id="MF_00295"/>
    </source>
</evidence>
<name>METAS_SALNS</name>
<gene>
    <name evidence="1" type="primary">metAS</name>
    <name type="ordered locus">SNSL254_A4518</name>
</gene>
<organism>
    <name type="scientific">Salmonella newport (strain SL254)</name>
    <dbReference type="NCBI Taxonomy" id="423368"/>
    <lineage>
        <taxon>Bacteria</taxon>
        <taxon>Pseudomonadati</taxon>
        <taxon>Pseudomonadota</taxon>
        <taxon>Gammaproteobacteria</taxon>
        <taxon>Enterobacterales</taxon>
        <taxon>Enterobacteriaceae</taxon>
        <taxon>Salmonella</taxon>
    </lineage>
</organism>
<sequence>MPIRVLDELPAVNFLREENVFVMTTSRASGQEIRPLKVLILNLMPKKIETENQFLRLLSNSPLQVDIQLLRIDARESRNTPAEHLNNFYCNFDDICDQNFDGLIVTGAPLGLVEFNDVAYWPQIRQVLEWAKDHVTSTLFVCWAVQAALNILYGIPKQTRTDKLSGVYEHHILHPHALLTRGFDDSFLAPHSRYADFPAALIRDYTDLEILAETEEGDAYLFASKDKRIAFVTGHPEYDAHTLAGEYFRDVEAGLNPEVPYNYFPKNDPQNIPRATWRSHGNLLFTNWLNYYVYQITPYDLRHMNPTLD</sequence>
<feature type="chain" id="PRO_1000115192" description="Homoserine O-succinyltransferase">
    <location>
        <begin position="1"/>
        <end position="309"/>
    </location>
</feature>
<feature type="active site" description="Acyl-thioester intermediate" evidence="1">
    <location>
        <position position="142"/>
    </location>
</feature>
<feature type="active site" description="Proton acceptor" evidence="1">
    <location>
        <position position="235"/>
    </location>
</feature>
<feature type="active site" evidence="1">
    <location>
        <position position="237"/>
    </location>
</feature>
<feature type="binding site" evidence="1">
    <location>
        <position position="163"/>
    </location>
    <ligand>
        <name>substrate</name>
    </ligand>
</feature>
<feature type="binding site" evidence="1">
    <location>
        <position position="192"/>
    </location>
    <ligand>
        <name>substrate</name>
    </ligand>
</feature>
<feature type="binding site" evidence="1">
    <location>
        <position position="249"/>
    </location>
    <ligand>
        <name>substrate</name>
    </ligand>
</feature>
<feature type="site" description="Important for acyl-CoA specificity" evidence="1">
    <location>
        <position position="111"/>
    </location>
</feature>
<feature type="site" description="Important for substrate specificity" evidence="1">
    <location>
        <position position="192"/>
    </location>
</feature>
<proteinExistence type="inferred from homology"/>
<accession>B4T110</accession>
<keyword id="KW-0012">Acyltransferase</keyword>
<keyword id="KW-0028">Amino-acid biosynthesis</keyword>
<keyword id="KW-0963">Cytoplasm</keyword>
<keyword id="KW-0486">Methionine biosynthesis</keyword>
<keyword id="KW-0808">Transferase</keyword>